<feature type="signal peptide" evidence="3">
    <location>
        <begin position="1"/>
        <end position="23"/>
    </location>
</feature>
<feature type="peptide" id="PRO_0000366097" description="Non-disulfide-bridged peptide 5.5" evidence="7 8">
    <location>
        <begin position="24"/>
        <end position="36"/>
    </location>
</feature>
<feature type="propeptide" id="PRO_0000366098" evidence="1">
    <location>
        <begin position="40"/>
        <end position="71"/>
    </location>
</feature>
<feature type="modified residue" description="Leucine amide" evidence="8">
    <location>
        <position position="36"/>
    </location>
</feature>
<sequence>MKTQFIVLIVAIVFLQLLSQSEAIFSAIAGLLSNLLGKRDLRHLDLDQFDDMFDQPEISAADMKFLQDLLR</sequence>
<comment type="function">
    <text evidence="2 4">Antimicrobial peptide (PubMed:28275372). Is active on Mycobacterium abscessus subsp. massiliense (MBC=200 uM), a rapidly growing and emerging pathogen associated with healthcare infections (PubMed:28275372). Also shows antifungal activities (By similarity). Has a weak hemolytic activity on human erythrocytes (10% at 610 uM), indicating a low toxicity (therapeutic index (TI)=3.05) (PubMed:28275372). In addition, treatment of infected macrophages reduces the bacterial load (PubMed:28275372). In vivo, treatment of M.abscessus-infected mice causes a decrease in the bacterial load in the lungs and liver (PubMed:28275372).</text>
</comment>
<comment type="subcellular location">
    <subcellularLocation>
        <location evidence="8">Secreted</location>
    </subcellularLocation>
    <subcellularLocation>
        <location evidence="8">Target cell membrane</location>
    </subcellularLocation>
    <text evidence="8">Has an amphipathic alpha-helical conformation.</text>
</comment>
<comment type="tissue specificity">
    <text evidence="8">Expressed by the venom gland.</text>
</comment>
<comment type="similarity">
    <text evidence="6">Belongs to the non-disulfide-bridged peptide (NDBP) superfamily. Short antimicrobial peptide (group 4) family.</text>
</comment>
<proteinExistence type="evidence at protein level"/>
<evidence type="ECO:0000250" key="1"/>
<evidence type="ECO:0000250" key="2">
    <source>
        <dbReference type="UniProtKB" id="E4VP07"/>
    </source>
</evidence>
<evidence type="ECO:0000255" key="3"/>
<evidence type="ECO:0000269" key="4">
    <source>
    </source>
</evidence>
<evidence type="ECO:0000303" key="5">
    <source>
    </source>
</evidence>
<evidence type="ECO:0000305" key="6"/>
<evidence type="ECO:0000305" key="7">
    <source>
    </source>
</evidence>
<evidence type="ECO:0000305" key="8">
    <source>
    </source>
</evidence>
<reference key="1">
    <citation type="journal article" date="2007" name="BMC Genomics">
        <title>Transcriptome analysis of the venom gland of the Mexican scorpion Hadrurus gertschi (Arachnida: Scorpiones).</title>
        <authorList>
            <person name="Schwartz E.F."/>
            <person name="Diego-Garcia E."/>
            <person name="Rodriguez de la Vega R.C."/>
            <person name="Possani L.D."/>
        </authorList>
    </citation>
    <scope>NUCLEOTIDE SEQUENCE [LARGE SCALE MRNA]</scope>
    <scope>NOMENCLATURE</scope>
    <source>
        <tissue>Venom gland</tissue>
    </source>
</reference>
<reference key="2">
    <citation type="journal article" date="2017" name="Front. Microbiol.">
        <title>Non-disulfide-bridge peptide 5.5 from the scorpion Hadrurus gertschi inhibits the growth of Mycobacterium abscessus subsp. massiliense.</title>
        <authorList>
            <person name="Trentini M.M."/>
            <person name="das Neves R.C."/>
            <person name="Santos B.P."/>
            <person name="DaSilva R.A."/>
            <person name="de Souza A.C."/>
            <person name="Mortari M.R."/>
            <person name="Schwartz E.F."/>
            <person name="Kipnis A."/>
            <person name="Junqueira-Kipnis A.P."/>
        </authorList>
    </citation>
    <scope>FUNCTION</scope>
    <scope>SYNTHESIS OF 24-36</scope>
    <scope>PROBABLE AMIDATION AT LEU-36</scope>
</reference>
<name>NDB4S_HOFGE</name>
<protein>
    <recommendedName>
        <fullName evidence="5">Non-disulfide-bridged peptide 5.5</fullName>
        <shortName evidence="5">NDBP-5.5</shortName>
    </recommendedName>
</protein>
<dbReference type="EMBL" id="EL698901">
    <property type="status" value="NOT_ANNOTATED_CDS"/>
    <property type="molecule type" value="mRNA"/>
</dbReference>
<dbReference type="SMR" id="P0C8W1"/>
<dbReference type="GO" id="GO:0005576">
    <property type="term" value="C:extracellular region"/>
    <property type="evidence" value="ECO:0007669"/>
    <property type="project" value="UniProtKB-SubCell"/>
</dbReference>
<dbReference type="GO" id="GO:0016020">
    <property type="term" value="C:membrane"/>
    <property type="evidence" value="ECO:0007669"/>
    <property type="project" value="UniProtKB-KW"/>
</dbReference>
<dbReference type="GO" id="GO:0044218">
    <property type="term" value="C:other organism cell membrane"/>
    <property type="evidence" value="ECO:0007669"/>
    <property type="project" value="UniProtKB-KW"/>
</dbReference>
<dbReference type="GO" id="GO:0042742">
    <property type="term" value="P:defense response to bacterium"/>
    <property type="evidence" value="ECO:0007669"/>
    <property type="project" value="UniProtKB-KW"/>
</dbReference>
<dbReference type="GO" id="GO:0050832">
    <property type="term" value="P:defense response to fungus"/>
    <property type="evidence" value="ECO:0007669"/>
    <property type="project" value="UniProtKB-KW"/>
</dbReference>
<dbReference type="GO" id="GO:0031640">
    <property type="term" value="P:killing of cells of another organism"/>
    <property type="evidence" value="ECO:0007669"/>
    <property type="project" value="UniProtKB-KW"/>
</dbReference>
<organism>
    <name type="scientific">Hoffmannihadrurus gertschi</name>
    <name type="common">Scorpion</name>
    <name type="synonym">Hadrurus gertschi</name>
    <dbReference type="NCBI Taxonomy" id="380989"/>
    <lineage>
        <taxon>Eukaryota</taxon>
        <taxon>Metazoa</taxon>
        <taxon>Ecdysozoa</taxon>
        <taxon>Arthropoda</taxon>
        <taxon>Chelicerata</taxon>
        <taxon>Arachnida</taxon>
        <taxon>Scorpiones</taxon>
        <taxon>Iurida</taxon>
        <taxon>Iuroidea</taxon>
        <taxon>Hadrurus</taxon>
    </lineage>
</organism>
<keyword id="KW-0027">Amidation</keyword>
<keyword id="KW-0044">Antibiotic</keyword>
<keyword id="KW-0929">Antimicrobial</keyword>
<keyword id="KW-0165">Cleavage on pair of basic residues</keyword>
<keyword id="KW-0295">Fungicide</keyword>
<keyword id="KW-0472">Membrane</keyword>
<keyword id="KW-0964">Secreted</keyword>
<keyword id="KW-0732">Signal</keyword>
<keyword id="KW-1052">Target cell membrane</keyword>
<keyword id="KW-1053">Target membrane</keyword>
<accession>P0C8W1</accession>